<protein>
    <recommendedName>
        <fullName evidence="1">Ribosome-binding factor A</fullName>
    </recommendedName>
</protein>
<sequence length="119" mass="13883">MSIRTEKVASLLQQELGAILEKELPRSSALSTVVDVKVTADLGIARIYVSVIGTEEQRTAIMAWLHDETKYLRKLLSAKIRHHFRRIPEIEFFEDRIYERASRIEQLLREVRKAPEQHD</sequence>
<proteinExistence type="inferred from homology"/>
<comment type="function">
    <text evidence="1">One of several proteins that assist in the late maturation steps of the functional core of the 30S ribosomal subunit. Associates with free 30S ribosomal subunits (but not with 30S subunits that are part of 70S ribosomes or polysomes). Required for efficient processing of 16S rRNA. May interact with the 5'-terminal helix region of 16S rRNA.</text>
</comment>
<comment type="subunit">
    <text evidence="1">Monomer. Binds 30S ribosomal subunits, but not 50S ribosomal subunits or 70S ribosomes.</text>
</comment>
<comment type="subcellular location">
    <subcellularLocation>
        <location evidence="1">Cytoplasm</location>
    </subcellularLocation>
</comment>
<comment type="similarity">
    <text evidence="1">Belongs to the RbfA family.</text>
</comment>
<keyword id="KW-0963">Cytoplasm</keyword>
<keyword id="KW-0690">Ribosome biogenesis</keyword>
<evidence type="ECO:0000255" key="1">
    <source>
        <dbReference type="HAMAP-Rule" id="MF_00003"/>
    </source>
</evidence>
<reference key="1">
    <citation type="submission" date="2008-05" db="EMBL/GenBank/DDBJ databases">
        <title>Complete sequence of Chlorobium limicola DSM 245.</title>
        <authorList>
            <consortium name="US DOE Joint Genome Institute"/>
            <person name="Lucas S."/>
            <person name="Copeland A."/>
            <person name="Lapidus A."/>
            <person name="Glavina del Rio T."/>
            <person name="Dalin E."/>
            <person name="Tice H."/>
            <person name="Bruce D."/>
            <person name="Goodwin L."/>
            <person name="Pitluck S."/>
            <person name="Schmutz J."/>
            <person name="Larimer F."/>
            <person name="Land M."/>
            <person name="Hauser L."/>
            <person name="Kyrpides N."/>
            <person name="Ovchinnikova G."/>
            <person name="Zhao F."/>
            <person name="Li T."/>
            <person name="Liu Z."/>
            <person name="Overmann J."/>
            <person name="Bryant D.A."/>
            <person name="Richardson P."/>
        </authorList>
    </citation>
    <scope>NUCLEOTIDE SEQUENCE [LARGE SCALE GENOMIC DNA]</scope>
    <source>
        <strain>DSM 245 / NBRC 103803 / 6330</strain>
    </source>
</reference>
<feature type="chain" id="PRO_1000088868" description="Ribosome-binding factor A">
    <location>
        <begin position="1"/>
        <end position="119"/>
    </location>
</feature>
<gene>
    <name evidence="1" type="primary">rbfA</name>
    <name type="ordered locus">Clim_0301</name>
</gene>
<accession>B3EFB2</accession>
<dbReference type="EMBL" id="CP001097">
    <property type="protein sequence ID" value="ACD89395.1"/>
    <property type="molecule type" value="Genomic_DNA"/>
</dbReference>
<dbReference type="RefSeq" id="WP_012465276.1">
    <property type="nucleotide sequence ID" value="NC_010803.1"/>
</dbReference>
<dbReference type="SMR" id="B3EFB2"/>
<dbReference type="STRING" id="290315.Clim_0301"/>
<dbReference type="KEGG" id="cli:Clim_0301"/>
<dbReference type="eggNOG" id="COG0858">
    <property type="taxonomic scope" value="Bacteria"/>
</dbReference>
<dbReference type="HOGENOM" id="CLU_089475_4_0_10"/>
<dbReference type="OrthoDB" id="9811910at2"/>
<dbReference type="Proteomes" id="UP000008841">
    <property type="component" value="Chromosome"/>
</dbReference>
<dbReference type="GO" id="GO:0005829">
    <property type="term" value="C:cytosol"/>
    <property type="evidence" value="ECO:0007669"/>
    <property type="project" value="TreeGrafter"/>
</dbReference>
<dbReference type="GO" id="GO:0043024">
    <property type="term" value="F:ribosomal small subunit binding"/>
    <property type="evidence" value="ECO:0007669"/>
    <property type="project" value="TreeGrafter"/>
</dbReference>
<dbReference type="GO" id="GO:0030490">
    <property type="term" value="P:maturation of SSU-rRNA"/>
    <property type="evidence" value="ECO:0007669"/>
    <property type="project" value="UniProtKB-UniRule"/>
</dbReference>
<dbReference type="Gene3D" id="3.30.300.20">
    <property type="match status" value="1"/>
</dbReference>
<dbReference type="HAMAP" id="MF_00003">
    <property type="entry name" value="RbfA"/>
    <property type="match status" value="1"/>
</dbReference>
<dbReference type="InterPro" id="IPR015946">
    <property type="entry name" value="KH_dom-like_a/b"/>
</dbReference>
<dbReference type="InterPro" id="IPR000238">
    <property type="entry name" value="RbfA"/>
</dbReference>
<dbReference type="InterPro" id="IPR023799">
    <property type="entry name" value="RbfA_dom_sf"/>
</dbReference>
<dbReference type="NCBIfam" id="TIGR00082">
    <property type="entry name" value="rbfA"/>
    <property type="match status" value="1"/>
</dbReference>
<dbReference type="PANTHER" id="PTHR33515">
    <property type="entry name" value="RIBOSOME-BINDING FACTOR A, CHLOROPLASTIC-RELATED"/>
    <property type="match status" value="1"/>
</dbReference>
<dbReference type="PANTHER" id="PTHR33515:SF1">
    <property type="entry name" value="RIBOSOME-BINDING FACTOR A, CHLOROPLASTIC-RELATED"/>
    <property type="match status" value="1"/>
</dbReference>
<dbReference type="Pfam" id="PF02033">
    <property type="entry name" value="RBFA"/>
    <property type="match status" value="1"/>
</dbReference>
<dbReference type="SUPFAM" id="SSF89919">
    <property type="entry name" value="Ribosome-binding factor A, RbfA"/>
    <property type="match status" value="1"/>
</dbReference>
<name>RBFA_CHLL2</name>
<organism>
    <name type="scientific">Chlorobium limicola (strain DSM 245 / NBRC 103803 / 6330)</name>
    <dbReference type="NCBI Taxonomy" id="290315"/>
    <lineage>
        <taxon>Bacteria</taxon>
        <taxon>Pseudomonadati</taxon>
        <taxon>Chlorobiota</taxon>
        <taxon>Chlorobiia</taxon>
        <taxon>Chlorobiales</taxon>
        <taxon>Chlorobiaceae</taxon>
        <taxon>Chlorobium/Pelodictyon group</taxon>
        <taxon>Chlorobium</taxon>
    </lineage>
</organism>